<feature type="chain" id="PRO_0000359203" description="Acireductone dioxygenase">
    <location>
        <begin position="1"/>
        <end position="177"/>
    </location>
</feature>
<feature type="binding site" evidence="1">
    <location>
        <position position="97"/>
    </location>
    <ligand>
        <name>Fe(2+)</name>
        <dbReference type="ChEBI" id="CHEBI:29033"/>
    </ligand>
</feature>
<feature type="binding site" evidence="1">
    <location>
        <position position="97"/>
    </location>
    <ligand>
        <name>Ni(2+)</name>
        <dbReference type="ChEBI" id="CHEBI:49786"/>
    </ligand>
</feature>
<feature type="binding site" evidence="1">
    <location>
        <position position="99"/>
    </location>
    <ligand>
        <name>Fe(2+)</name>
        <dbReference type="ChEBI" id="CHEBI:29033"/>
    </ligand>
</feature>
<feature type="binding site" evidence="1">
    <location>
        <position position="99"/>
    </location>
    <ligand>
        <name>Ni(2+)</name>
        <dbReference type="ChEBI" id="CHEBI:49786"/>
    </ligand>
</feature>
<feature type="binding site" evidence="1">
    <location>
        <position position="103"/>
    </location>
    <ligand>
        <name>Fe(2+)</name>
        <dbReference type="ChEBI" id="CHEBI:29033"/>
    </ligand>
</feature>
<feature type="binding site" evidence="1">
    <location>
        <position position="103"/>
    </location>
    <ligand>
        <name>Ni(2+)</name>
        <dbReference type="ChEBI" id="CHEBI:49786"/>
    </ligand>
</feature>
<feature type="binding site" evidence="1">
    <location>
        <position position="141"/>
    </location>
    <ligand>
        <name>Fe(2+)</name>
        <dbReference type="ChEBI" id="CHEBI:29033"/>
    </ligand>
</feature>
<feature type="binding site" evidence="1">
    <location>
        <position position="141"/>
    </location>
    <ligand>
        <name>Ni(2+)</name>
        <dbReference type="ChEBI" id="CHEBI:49786"/>
    </ligand>
</feature>
<feature type="site" description="Important to generate the dianion" evidence="1">
    <location>
        <position position="105"/>
    </location>
</feature>
<dbReference type="EC" id="1.13.11.54" evidence="1"/>
<dbReference type="EC" id="1.13.11.53" evidence="1"/>
<dbReference type="EMBL" id="CP000786">
    <property type="protein sequence ID" value="ABZ97418.1"/>
    <property type="status" value="ALT_INIT"/>
    <property type="molecule type" value="Genomic_DNA"/>
</dbReference>
<dbReference type="RefSeq" id="WP_041769985.1">
    <property type="nucleotide sequence ID" value="NC_010602.1"/>
</dbReference>
<dbReference type="SMR" id="B0SP94"/>
<dbReference type="STRING" id="456481.LEPBI_I1308"/>
<dbReference type="KEGG" id="lbi:LEPBI_I1308"/>
<dbReference type="HOGENOM" id="CLU_125400_0_0_12"/>
<dbReference type="OrthoDB" id="9795636at2"/>
<dbReference type="BioCyc" id="LBIF456481:LEPBI_RS06405-MONOMER"/>
<dbReference type="UniPathway" id="UPA00904">
    <property type="reaction ID" value="UER00878"/>
</dbReference>
<dbReference type="Proteomes" id="UP000001847">
    <property type="component" value="Chromosome I"/>
</dbReference>
<dbReference type="GO" id="GO:0010308">
    <property type="term" value="F:acireductone dioxygenase (Ni2+-requiring) activity"/>
    <property type="evidence" value="ECO:0007669"/>
    <property type="project" value="UniProtKB-UniRule"/>
</dbReference>
<dbReference type="GO" id="GO:0010309">
    <property type="term" value="F:acireductone dioxygenase [iron(II)-requiring] activity"/>
    <property type="evidence" value="ECO:0007669"/>
    <property type="project" value="UniProtKB-UniRule"/>
</dbReference>
<dbReference type="GO" id="GO:0005506">
    <property type="term" value="F:iron ion binding"/>
    <property type="evidence" value="ECO:0007669"/>
    <property type="project" value="UniProtKB-UniRule"/>
</dbReference>
<dbReference type="GO" id="GO:0016151">
    <property type="term" value="F:nickel cation binding"/>
    <property type="evidence" value="ECO:0007669"/>
    <property type="project" value="UniProtKB-UniRule"/>
</dbReference>
<dbReference type="GO" id="GO:0019509">
    <property type="term" value="P:L-methionine salvage from methylthioadenosine"/>
    <property type="evidence" value="ECO:0007669"/>
    <property type="project" value="UniProtKB-UniRule"/>
</dbReference>
<dbReference type="GO" id="GO:0019284">
    <property type="term" value="P:L-methionine salvage from S-adenosylmethionine"/>
    <property type="evidence" value="ECO:0007669"/>
    <property type="project" value="InterPro"/>
</dbReference>
<dbReference type="CDD" id="cd02232">
    <property type="entry name" value="cupin_ARD"/>
    <property type="match status" value="1"/>
</dbReference>
<dbReference type="Gene3D" id="2.60.120.10">
    <property type="entry name" value="Jelly Rolls"/>
    <property type="match status" value="1"/>
</dbReference>
<dbReference type="HAMAP" id="MF_01682">
    <property type="entry name" value="Salvage_MtnD"/>
    <property type="match status" value="1"/>
</dbReference>
<dbReference type="InterPro" id="IPR004313">
    <property type="entry name" value="ARD"/>
</dbReference>
<dbReference type="InterPro" id="IPR023956">
    <property type="entry name" value="ARD_bac"/>
</dbReference>
<dbReference type="InterPro" id="IPR014710">
    <property type="entry name" value="RmlC-like_jellyroll"/>
</dbReference>
<dbReference type="InterPro" id="IPR011051">
    <property type="entry name" value="RmlC_Cupin_sf"/>
</dbReference>
<dbReference type="PANTHER" id="PTHR23418">
    <property type="entry name" value="ACIREDUCTONE DIOXYGENASE"/>
    <property type="match status" value="1"/>
</dbReference>
<dbReference type="PANTHER" id="PTHR23418:SF0">
    <property type="entry name" value="ACIREDUCTONE DIOXYGENASE"/>
    <property type="match status" value="1"/>
</dbReference>
<dbReference type="Pfam" id="PF03079">
    <property type="entry name" value="ARD"/>
    <property type="match status" value="1"/>
</dbReference>
<dbReference type="SUPFAM" id="SSF51182">
    <property type="entry name" value="RmlC-like cupins"/>
    <property type="match status" value="1"/>
</dbReference>
<proteinExistence type="inferred from homology"/>
<sequence length="177" mass="20227">MATIVKKQETIQDKDQVKAYLTQKGLVYESYKTPESLDLILGQKGLSDAEKEEVLSGLEYRFDQLKKQHGYKANDLVVLHDEVPGISDMLAKFDKLHIHTDEEVRYIIDGSGIFGFIIDGERFEVHVGKGDFISIPANTNHWFTLDQTMRIKAVRYFKDNSGWTPVYVDESKVLINA</sequence>
<evidence type="ECO:0000255" key="1">
    <source>
        <dbReference type="HAMAP-Rule" id="MF_01682"/>
    </source>
</evidence>
<evidence type="ECO:0000305" key="2"/>
<accession>B0SP94</accession>
<organism>
    <name type="scientific">Leptospira biflexa serovar Patoc (strain Patoc 1 / ATCC 23582 / Paris)</name>
    <dbReference type="NCBI Taxonomy" id="456481"/>
    <lineage>
        <taxon>Bacteria</taxon>
        <taxon>Pseudomonadati</taxon>
        <taxon>Spirochaetota</taxon>
        <taxon>Spirochaetia</taxon>
        <taxon>Leptospirales</taxon>
        <taxon>Leptospiraceae</taxon>
        <taxon>Leptospira</taxon>
    </lineage>
</organism>
<reference key="1">
    <citation type="journal article" date="2008" name="PLoS ONE">
        <title>Genome sequence of the saprophyte Leptospira biflexa provides insights into the evolution of Leptospira and the pathogenesis of leptospirosis.</title>
        <authorList>
            <person name="Picardeau M."/>
            <person name="Bulach D.M."/>
            <person name="Bouchier C."/>
            <person name="Zuerner R.L."/>
            <person name="Zidane N."/>
            <person name="Wilson P.J."/>
            <person name="Creno S."/>
            <person name="Kuczek E.S."/>
            <person name="Bommezzadri S."/>
            <person name="Davis J.C."/>
            <person name="McGrath A."/>
            <person name="Johnson M.J."/>
            <person name="Boursaux-Eude C."/>
            <person name="Seemann T."/>
            <person name="Rouy Z."/>
            <person name="Coppel R.L."/>
            <person name="Rood J.I."/>
            <person name="Lajus A."/>
            <person name="Davies J.K."/>
            <person name="Medigue C."/>
            <person name="Adler B."/>
        </authorList>
    </citation>
    <scope>NUCLEOTIDE SEQUENCE [LARGE SCALE GENOMIC DNA]</scope>
    <source>
        <strain>Patoc 1 / ATCC 23582 / Paris</strain>
    </source>
</reference>
<protein>
    <recommendedName>
        <fullName evidence="1">Acireductone dioxygenase</fullName>
    </recommendedName>
    <alternativeName>
        <fullName evidence="1">1,2-dihydroxy-3-keto-5-methylthiopentene dioxygenase</fullName>
        <shortName evidence="1">DHK-MTPene dioxygenase</shortName>
    </alternativeName>
    <alternativeName>
        <fullName evidence="1">Acireductone dioxygenase (Fe(2+)-requiring)</fullName>
        <shortName evidence="1">ARD'</shortName>
        <shortName evidence="1">Fe-ARD</shortName>
        <ecNumber evidence="1">1.13.11.54</ecNumber>
    </alternativeName>
    <alternativeName>
        <fullName evidence="1">Acireductone dioxygenase (Ni(2+)-requiring)</fullName>
        <shortName evidence="1">ARD</shortName>
        <shortName evidence="1">Ni-ARD</shortName>
        <ecNumber evidence="1">1.13.11.53</ecNumber>
    </alternativeName>
</protein>
<keyword id="KW-0028">Amino-acid biosynthesis</keyword>
<keyword id="KW-0223">Dioxygenase</keyword>
<keyword id="KW-0408">Iron</keyword>
<keyword id="KW-0479">Metal-binding</keyword>
<keyword id="KW-0486">Methionine biosynthesis</keyword>
<keyword id="KW-0533">Nickel</keyword>
<keyword id="KW-0560">Oxidoreductase</keyword>
<keyword id="KW-1185">Reference proteome</keyword>
<comment type="function">
    <text evidence="1">Catalyzes 2 different reactions between oxygen and the acireductone 1,2-dihydroxy-3-keto-5-methylthiopentene (DHK-MTPene) depending upon the metal bound in the active site. Fe-containing acireductone dioxygenase (Fe-ARD) produces formate and 2-keto-4-methylthiobutyrate (KMTB), the alpha-ketoacid precursor of methionine in the methionine recycle pathway. Ni-containing acireductone dioxygenase (Ni-ARD) produces methylthiopropionate, carbon monoxide and formate, and does not lie on the methionine recycle pathway.</text>
</comment>
<comment type="catalytic activity">
    <reaction evidence="1">
        <text>1,2-dihydroxy-5-(methylsulfanyl)pent-1-en-3-one + O2 = 3-(methylsulfanyl)propanoate + CO + formate + 2 H(+)</text>
        <dbReference type="Rhea" id="RHEA:14161"/>
        <dbReference type="ChEBI" id="CHEBI:15378"/>
        <dbReference type="ChEBI" id="CHEBI:15379"/>
        <dbReference type="ChEBI" id="CHEBI:15740"/>
        <dbReference type="ChEBI" id="CHEBI:17245"/>
        <dbReference type="ChEBI" id="CHEBI:49016"/>
        <dbReference type="ChEBI" id="CHEBI:49252"/>
        <dbReference type="EC" id="1.13.11.53"/>
    </reaction>
</comment>
<comment type="catalytic activity">
    <reaction evidence="1">
        <text>1,2-dihydroxy-5-(methylsulfanyl)pent-1-en-3-one + O2 = 4-methylsulfanyl-2-oxobutanoate + formate + 2 H(+)</text>
        <dbReference type="Rhea" id="RHEA:24504"/>
        <dbReference type="ChEBI" id="CHEBI:15378"/>
        <dbReference type="ChEBI" id="CHEBI:15379"/>
        <dbReference type="ChEBI" id="CHEBI:15740"/>
        <dbReference type="ChEBI" id="CHEBI:16723"/>
        <dbReference type="ChEBI" id="CHEBI:49252"/>
        <dbReference type="EC" id="1.13.11.54"/>
    </reaction>
</comment>
<comment type="cofactor">
    <cofactor evidence="1">
        <name>Fe(2+)</name>
        <dbReference type="ChEBI" id="CHEBI:29033"/>
    </cofactor>
    <text evidence="1">Binds 1 Fe(2+) cation per monomer.</text>
</comment>
<comment type="cofactor">
    <cofactor evidence="1">
        <name>Ni(2+)</name>
        <dbReference type="ChEBI" id="CHEBI:49786"/>
    </cofactor>
    <text evidence="1">Binds 1 nickel ion per monomer.</text>
</comment>
<comment type="pathway">
    <text evidence="1">Amino-acid biosynthesis; L-methionine biosynthesis via salvage pathway; L-methionine from S-methyl-5-thio-alpha-D-ribose 1-phosphate: step 5/6.</text>
</comment>
<comment type="subunit">
    <text evidence="1">Monomer.</text>
</comment>
<comment type="similarity">
    <text evidence="1">Belongs to the acireductone dioxygenase (ARD) family.</text>
</comment>
<comment type="sequence caution" evidence="2">
    <conflict type="erroneous initiation">
        <sequence resource="EMBL-CDS" id="ABZ97418"/>
    </conflict>
</comment>
<gene>
    <name evidence="1" type="primary">mtnD</name>
    <name type="ordered locus">LEPBI_I1308</name>
</gene>
<name>MTND_LEPBP</name>